<feature type="chain" id="PRO_1000189638" description="ATP-dependent Clp protease proteolytic subunit">
    <location>
        <begin position="1"/>
        <end position="194"/>
    </location>
</feature>
<feature type="active site" description="Nucleophile" evidence="1">
    <location>
        <position position="98"/>
    </location>
</feature>
<feature type="active site" evidence="1">
    <location>
        <position position="123"/>
    </location>
</feature>
<evidence type="ECO:0000255" key="1">
    <source>
        <dbReference type="HAMAP-Rule" id="MF_00444"/>
    </source>
</evidence>
<organism>
    <name type="scientific">Clostridium botulinum (strain Okra / Type B1)</name>
    <dbReference type="NCBI Taxonomy" id="498213"/>
    <lineage>
        <taxon>Bacteria</taxon>
        <taxon>Bacillati</taxon>
        <taxon>Bacillota</taxon>
        <taxon>Clostridia</taxon>
        <taxon>Eubacteriales</taxon>
        <taxon>Clostridiaceae</taxon>
        <taxon>Clostridium</taxon>
    </lineage>
</organism>
<sequence>MSLVPVVVEQTNRGERSYDIYSRLLKDRIIMLSEEVNDTTASLIVAQLLFLEAEDPDKDIHLYINSPGGSITSGMAIYDTMQYIKPDVSTICVGMAASMGAFLLAAGAKGKRYALPNSEVMIHQPLGGFRGQATDIGIHAERILKMKKKLNTILSDRTGKPLEQVELDTERDHFLSAEEAKEYGLIDEVIDKKK</sequence>
<name>CLPP_CLOBK</name>
<gene>
    <name evidence="1" type="primary">clpP</name>
    <name type="ordered locus">CLD_1300</name>
</gene>
<protein>
    <recommendedName>
        <fullName evidence="1">ATP-dependent Clp protease proteolytic subunit</fullName>
        <ecNumber evidence="1">3.4.21.92</ecNumber>
    </recommendedName>
    <alternativeName>
        <fullName evidence="1">Endopeptidase Clp</fullName>
    </alternativeName>
</protein>
<proteinExistence type="inferred from homology"/>
<reference key="1">
    <citation type="journal article" date="2007" name="PLoS ONE">
        <title>Analysis of the neurotoxin complex genes in Clostridium botulinum A1-A4 and B1 strains: BoNT/A3, /Ba4 and /B1 clusters are located within plasmids.</title>
        <authorList>
            <person name="Smith T.J."/>
            <person name="Hill K.K."/>
            <person name="Foley B.T."/>
            <person name="Detter J.C."/>
            <person name="Munk A.C."/>
            <person name="Bruce D.C."/>
            <person name="Doggett N.A."/>
            <person name="Smith L.A."/>
            <person name="Marks J.D."/>
            <person name="Xie G."/>
            <person name="Brettin T.S."/>
        </authorList>
    </citation>
    <scope>NUCLEOTIDE SEQUENCE [LARGE SCALE GENOMIC DNA]</scope>
    <source>
        <strain>Okra / Type B1</strain>
    </source>
</reference>
<comment type="function">
    <text evidence="1">Cleaves peptides in various proteins in a process that requires ATP hydrolysis. Has a chymotrypsin-like activity. Plays a major role in the degradation of misfolded proteins.</text>
</comment>
<comment type="catalytic activity">
    <reaction evidence="1">
        <text>Hydrolysis of proteins to small peptides in the presence of ATP and magnesium. alpha-casein is the usual test substrate. In the absence of ATP, only oligopeptides shorter than five residues are hydrolyzed (such as succinyl-Leu-Tyr-|-NHMec, and Leu-Tyr-Leu-|-Tyr-Trp, in which cleavage of the -Tyr-|-Leu- and -Tyr-|-Trp bonds also occurs).</text>
        <dbReference type="EC" id="3.4.21.92"/>
    </reaction>
</comment>
<comment type="subunit">
    <text evidence="1">Fourteen ClpP subunits assemble into 2 heptameric rings which stack back to back to give a disk-like structure with a central cavity, resembling the structure of eukaryotic proteasomes.</text>
</comment>
<comment type="subcellular location">
    <subcellularLocation>
        <location evidence="1">Cytoplasm</location>
    </subcellularLocation>
</comment>
<comment type="similarity">
    <text evidence="1">Belongs to the peptidase S14 family.</text>
</comment>
<keyword id="KW-0963">Cytoplasm</keyword>
<keyword id="KW-0378">Hydrolase</keyword>
<keyword id="KW-0645">Protease</keyword>
<keyword id="KW-0720">Serine protease</keyword>
<dbReference type="EC" id="3.4.21.92" evidence="1"/>
<dbReference type="EMBL" id="CP000939">
    <property type="protein sequence ID" value="ACA43615.1"/>
    <property type="molecule type" value="Genomic_DNA"/>
</dbReference>
<dbReference type="RefSeq" id="WP_003357557.1">
    <property type="nucleotide sequence ID" value="NC_010516.1"/>
</dbReference>
<dbReference type="SMR" id="B1IND7"/>
<dbReference type="MEROPS" id="S14.001"/>
<dbReference type="GeneID" id="5187372"/>
<dbReference type="KEGG" id="cbb:CLD_1300"/>
<dbReference type="HOGENOM" id="CLU_058707_3_2_9"/>
<dbReference type="Proteomes" id="UP000008541">
    <property type="component" value="Chromosome"/>
</dbReference>
<dbReference type="GO" id="GO:0005737">
    <property type="term" value="C:cytoplasm"/>
    <property type="evidence" value="ECO:0007669"/>
    <property type="project" value="UniProtKB-SubCell"/>
</dbReference>
<dbReference type="GO" id="GO:0009368">
    <property type="term" value="C:endopeptidase Clp complex"/>
    <property type="evidence" value="ECO:0007669"/>
    <property type="project" value="TreeGrafter"/>
</dbReference>
<dbReference type="GO" id="GO:0004176">
    <property type="term" value="F:ATP-dependent peptidase activity"/>
    <property type="evidence" value="ECO:0007669"/>
    <property type="project" value="InterPro"/>
</dbReference>
<dbReference type="GO" id="GO:0051117">
    <property type="term" value="F:ATPase binding"/>
    <property type="evidence" value="ECO:0007669"/>
    <property type="project" value="TreeGrafter"/>
</dbReference>
<dbReference type="GO" id="GO:0004252">
    <property type="term" value="F:serine-type endopeptidase activity"/>
    <property type="evidence" value="ECO:0007669"/>
    <property type="project" value="UniProtKB-UniRule"/>
</dbReference>
<dbReference type="GO" id="GO:0006515">
    <property type="term" value="P:protein quality control for misfolded or incompletely synthesized proteins"/>
    <property type="evidence" value="ECO:0007669"/>
    <property type="project" value="TreeGrafter"/>
</dbReference>
<dbReference type="CDD" id="cd07017">
    <property type="entry name" value="S14_ClpP_2"/>
    <property type="match status" value="1"/>
</dbReference>
<dbReference type="FunFam" id="3.90.226.10:FF:000001">
    <property type="entry name" value="ATP-dependent Clp protease proteolytic subunit"/>
    <property type="match status" value="1"/>
</dbReference>
<dbReference type="Gene3D" id="3.90.226.10">
    <property type="entry name" value="2-enoyl-CoA Hydratase, Chain A, domain 1"/>
    <property type="match status" value="1"/>
</dbReference>
<dbReference type="HAMAP" id="MF_00444">
    <property type="entry name" value="ClpP"/>
    <property type="match status" value="1"/>
</dbReference>
<dbReference type="InterPro" id="IPR001907">
    <property type="entry name" value="ClpP"/>
</dbReference>
<dbReference type="InterPro" id="IPR029045">
    <property type="entry name" value="ClpP/crotonase-like_dom_sf"/>
</dbReference>
<dbReference type="InterPro" id="IPR023562">
    <property type="entry name" value="ClpP/TepA"/>
</dbReference>
<dbReference type="InterPro" id="IPR033135">
    <property type="entry name" value="ClpP_His_AS"/>
</dbReference>
<dbReference type="InterPro" id="IPR018215">
    <property type="entry name" value="ClpP_Ser_AS"/>
</dbReference>
<dbReference type="NCBIfam" id="TIGR00493">
    <property type="entry name" value="clpP"/>
    <property type="match status" value="1"/>
</dbReference>
<dbReference type="NCBIfam" id="NF001368">
    <property type="entry name" value="PRK00277.1"/>
    <property type="match status" value="1"/>
</dbReference>
<dbReference type="NCBIfam" id="NF009205">
    <property type="entry name" value="PRK12553.1"/>
    <property type="match status" value="1"/>
</dbReference>
<dbReference type="PANTHER" id="PTHR10381">
    <property type="entry name" value="ATP-DEPENDENT CLP PROTEASE PROTEOLYTIC SUBUNIT"/>
    <property type="match status" value="1"/>
</dbReference>
<dbReference type="PANTHER" id="PTHR10381:SF70">
    <property type="entry name" value="ATP-DEPENDENT CLP PROTEASE PROTEOLYTIC SUBUNIT"/>
    <property type="match status" value="1"/>
</dbReference>
<dbReference type="Pfam" id="PF00574">
    <property type="entry name" value="CLP_protease"/>
    <property type="match status" value="1"/>
</dbReference>
<dbReference type="PRINTS" id="PR00127">
    <property type="entry name" value="CLPPROTEASEP"/>
</dbReference>
<dbReference type="SUPFAM" id="SSF52096">
    <property type="entry name" value="ClpP/crotonase"/>
    <property type="match status" value="1"/>
</dbReference>
<dbReference type="PROSITE" id="PS00382">
    <property type="entry name" value="CLP_PROTEASE_HIS"/>
    <property type="match status" value="1"/>
</dbReference>
<dbReference type="PROSITE" id="PS00381">
    <property type="entry name" value="CLP_PROTEASE_SER"/>
    <property type="match status" value="1"/>
</dbReference>
<accession>B1IND7</accession>